<sequence>MEFFNILQSSCNDVNLDFNDKKYNQFISYKNLIQEWNKKVNLTAIVEDEEIIKKHFIDCIKIFKASPIGEAKSLIDIGTGAGFPGIPIKILREDIKITLLDSLQKRINFLNIVIGDLKLKDIQCLHGRAEDYAQEAEHRQKYDVAVSRAVANLAVLSEFCIPFVKKGGYFIAMKGPSVEEEITVATKSIEVLGGKIEDIIKIDIEDTDLKHNLVIIKKVKETEKKYPRKPGIIKKDPLK</sequence>
<name>RSMG_CLOBM</name>
<dbReference type="EC" id="2.1.1.-" evidence="1"/>
<dbReference type="EMBL" id="CP000962">
    <property type="protein sequence ID" value="ACA55830.1"/>
    <property type="molecule type" value="Genomic_DNA"/>
</dbReference>
<dbReference type="RefSeq" id="WP_012343763.1">
    <property type="nucleotide sequence ID" value="NC_010520.1"/>
</dbReference>
<dbReference type="SMR" id="B1KUB0"/>
<dbReference type="KEGG" id="cbl:CLK_3125"/>
<dbReference type="HOGENOM" id="CLU_065341_0_0_9"/>
<dbReference type="GO" id="GO:0005829">
    <property type="term" value="C:cytosol"/>
    <property type="evidence" value="ECO:0007669"/>
    <property type="project" value="TreeGrafter"/>
</dbReference>
<dbReference type="GO" id="GO:0070043">
    <property type="term" value="F:rRNA (guanine-N7-)-methyltransferase activity"/>
    <property type="evidence" value="ECO:0007669"/>
    <property type="project" value="UniProtKB-UniRule"/>
</dbReference>
<dbReference type="CDD" id="cd02440">
    <property type="entry name" value="AdoMet_MTases"/>
    <property type="match status" value="1"/>
</dbReference>
<dbReference type="FunFam" id="3.40.50.150:FF:000041">
    <property type="entry name" value="Ribosomal RNA small subunit methyltransferase G"/>
    <property type="match status" value="1"/>
</dbReference>
<dbReference type="Gene3D" id="3.40.50.150">
    <property type="entry name" value="Vaccinia Virus protein VP39"/>
    <property type="match status" value="1"/>
</dbReference>
<dbReference type="HAMAP" id="MF_00074">
    <property type="entry name" value="16SrRNA_methyltr_G"/>
    <property type="match status" value="1"/>
</dbReference>
<dbReference type="InterPro" id="IPR003682">
    <property type="entry name" value="rRNA_ssu_MeTfrase_G"/>
</dbReference>
<dbReference type="InterPro" id="IPR029063">
    <property type="entry name" value="SAM-dependent_MTases_sf"/>
</dbReference>
<dbReference type="NCBIfam" id="TIGR00138">
    <property type="entry name" value="rsmG_gidB"/>
    <property type="match status" value="1"/>
</dbReference>
<dbReference type="PANTHER" id="PTHR31760">
    <property type="entry name" value="S-ADENOSYL-L-METHIONINE-DEPENDENT METHYLTRANSFERASES SUPERFAMILY PROTEIN"/>
    <property type="match status" value="1"/>
</dbReference>
<dbReference type="PANTHER" id="PTHR31760:SF0">
    <property type="entry name" value="S-ADENOSYL-L-METHIONINE-DEPENDENT METHYLTRANSFERASES SUPERFAMILY PROTEIN"/>
    <property type="match status" value="1"/>
</dbReference>
<dbReference type="Pfam" id="PF02527">
    <property type="entry name" value="GidB"/>
    <property type="match status" value="1"/>
</dbReference>
<dbReference type="PIRSF" id="PIRSF003078">
    <property type="entry name" value="GidB"/>
    <property type="match status" value="1"/>
</dbReference>
<dbReference type="SUPFAM" id="SSF53335">
    <property type="entry name" value="S-adenosyl-L-methionine-dependent methyltransferases"/>
    <property type="match status" value="1"/>
</dbReference>
<comment type="function">
    <text evidence="1">Specifically methylates the N7 position of a guanine in 16S rRNA.</text>
</comment>
<comment type="subcellular location">
    <subcellularLocation>
        <location evidence="1">Cytoplasm</location>
    </subcellularLocation>
</comment>
<comment type="similarity">
    <text evidence="1">Belongs to the methyltransferase superfamily. RNA methyltransferase RsmG family.</text>
</comment>
<reference key="1">
    <citation type="journal article" date="2007" name="PLoS ONE">
        <title>Analysis of the neurotoxin complex genes in Clostridium botulinum A1-A4 and B1 strains: BoNT/A3, /Ba4 and /B1 clusters are located within plasmids.</title>
        <authorList>
            <person name="Smith T.J."/>
            <person name="Hill K.K."/>
            <person name="Foley B.T."/>
            <person name="Detter J.C."/>
            <person name="Munk A.C."/>
            <person name="Bruce D.C."/>
            <person name="Doggett N.A."/>
            <person name="Smith L.A."/>
            <person name="Marks J.D."/>
            <person name="Xie G."/>
            <person name="Brettin T.S."/>
        </authorList>
    </citation>
    <scope>NUCLEOTIDE SEQUENCE [LARGE SCALE GENOMIC DNA]</scope>
    <source>
        <strain>Loch Maree / Type A3</strain>
    </source>
</reference>
<organism>
    <name type="scientific">Clostridium botulinum (strain Loch Maree / Type A3)</name>
    <dbReference type="NCBI Taxonomy" id="498214"/>
    <lineage>
        <taxon>Bacteria</taxon>
        <taxon>Bacillati</taxon>
        <taxon>Bacillota</taxon>
        <taxon>Clostridia</taxon>
        <taxon>Eubacteriales</taxon>
        <taxon>Clostridiaceae</taxon>
        <taxon>Clostridium</taxon>
    </lineage>
</organism>
<feature type="chain" id="PRO_0000342910" description="Ribosomal RNA small subunit methyltransferase G">
    <location>
        <begin position="1"/>
        <end position="239"/>
    </location>
</feature>
<feature type="binding site" evidence="1">
    <location>
        <position position="78"/>
    </location>
    <ligand>
        <name>S-adenosyl-L-methionine</name>
        <dbReference type="ChEBI" id="CHEBI:59789"/>
    </ligand>
</feature>
<feature type="binding site" evidence="1">
    <location>
        <position position="83"/>
    </location>
    <ligand>
        <name>S-adenosyl-L-methionine</name>
        <dbReference type="ChEBI" id="CHEBI:59789"/>
    </ligand>
</feature>
<feature type="binding site" evidence="1">
    <location>
        <begin position="129"/>
        <end position="130"/>
    </location>
    <ligand>
        <name>S-adenosyl-L-methionine</name>
        <dbReference type="ChEBI" id="CHEBI:59789"/>
    </ligand>
</feature>
<feature type="binding site" evidence="1">
    <location>
        <position position="148"/>
    </location>
    <ligand>
        <name>S-adenosyl-L-methionine</name>
        <dbReference type="ChEBI" id="CHEBI:59789"/>
    </ligand>
</feature>
<protein>
    <recommendedName>
        <fullName evidence="1">Ribosomal RNA small subunit methyltransferase G</fullName>
        <ecNumber evidence="1">2.1.1.-</ecNumber>
    </recommendedName>
    <alternativeName>
        <fullName evidence="1">16S rRNA 7-methylguanosine methyltransferase</fullName>
        <shortName evidence="1">16S rRNA m7G methyltransferase</shortName>
    </alternativeName>
</protein>
<gene>
    <name evidence="1" type="primary">rsmG</name>
    <name type="ordered locus">CLK_3125</name>
</gene>
<evidence type="ECO:0000255" key="1">
    <source>
        <dbReference type="HAMAP-Rule" id="MF_00074"/>
    </source>
</evidence>
<keyword id="KW-0963">Cytoplasm</keyword>
<keyword id="KW-0489">Methyltransferase</keyword>
<keyword id="KW-0698">rRNA processing</keyword>
<keyword id="KW-0949">S-adenosyl-L-methionine</keyword>
<keyword id="KW-0808">Transferase</keyword>
<proteinExistence type="inferred from homology"/>
<accession>B1KUB0</accession>